<proteinExistence type="inferred from homology"/>
<reference key="1">
    <citation type="submission" date="2008-08" db="EMBL/GenBank/DDBJ databases">
        <title>The complete genome sequence of Thermodesulfovibrio yellowstonii strain ATCC 51303 / DSM 11347 / YP87.</title>
        <authorList>
            <person name="Dodson R.J."/>
            <person name="Durkin A.S."/>
            <person name="Wu M."/>
            <person name="Eisen J."/>
            <person name="Sutton G."/>
        </authorList>
    </citation>
    <scope>NUCLEOTIDE SEQUENCE [LARGE SCALE GENOMIC DNA]</scope>
    <source>
        <strain>ATCC 51303 / DSM 11347 / YP87</strain>
    </source>
</reference>
<keyword id="KW-0067">ATP-binding</keyword>
<keyword id="KW-0093">Biotin biosynthesis</keyword>
<keyword id="KW-0436">Ligase</keyword>
<keyword id="KW-0460">Magnesium</keyword>
<keyword id="KW-0547">Nucleotide-binding</keyword>
<keyword id="KW-1185">Reference proteome</keyword>
<protein>
    <recommendedName>
        <fullName evidence="1">6-carboxyhexanoate--CoA ligase</fullName>
        <ecNumber evidence="1">6.2.1.14</ecNumber>
    </recommendedName>
    <alternativeName>
        <fullName evidence="1">Pimeloyl-CoA synthase</fullName>
    </alternativeName>
</protein>
<name>BIOW_THEYD</name>
<accession>B5YK86</accession>
<sequence>MWSVRMRASKKENNIEKHISGAEGIYDYSQIERVLKQLFKRAFEHSKGKPDKVVITVERINEEIQTVSALPVNTFFTNSPEEAFCLISEKLSSIGISDKALFSAFEVIKKYPMRGATLIDSITGERLERDKTRGIRVSRIHMDKRKRMKLIRQIKNLSTQPQRVIEAITIASKVASYPEVVAELCISDNPDYTIGYIASRDLGYLRITNIKNKGETIGGRAFFVKTPCDIEKLTNYLERKPVLVI</sequence>
<dbReference type="EC" id="6.2.1.14" evidence="1"/>
<dbReference type="EMBL" id="CP001147">
    <property type="protein sequence ID" value="ACI21089.1"/>
    <property type="molecule type" value="Genomic_DNA"/>
</dbReference>
<dbReference type="RefSeq" id="YP_002248651.1">
    <property type="nucleotide sequence ID" value="NC_011296.1"/>
</dbReference>
<dbReference type="SMR" id="B5YK86"/>
<dbReference type="STRING" id="289376.THEYE_A0810"/>
<dbReference type="EnsemblBacteria" id="ACI21089">
    <property type="protein sequence ID" value="ACI21089"/>
    <property type="gene ID" value="THEYE_A0810"/>
</dbReference>
<dbReference type="KEGG" id="tye:THEYE_A0810"/>
<dbReference type="PATRIC" id="fig|289376.4.peg.800"/>
<dbReference type="eggNOG" id="COG1424">
    <property type="taxonomic scope" value="Bacteria"/>
</dbReference>
<dbReference type="HOGENOM" id="CLU_076858_0_0_0"/>
<dbReference type="InParanoid" id="B5YK86"/>
<dbReference type="OrthoDB" id="9792985at2"/>
<dbReference type="UniPathway" id="UPA00999">
    <property type="reaction ID" value="UER00351"/>
</dbReference>
<dbReference type="Proteomes" id="UP000000718">
    <property type="component" value="Chromosome"/>
</dbReference>
<dbReference type="GO" id="GO:0042410">
    <property type="term" value="F:6-carboxyhexanoate-CoA ligase activity"/>
    <property type="evidence" value="ECO:0007669"/>
    <property type="project" value="UniProtKB-UniRule"/>
</dbReference>
<dbReference type="GO" id="GO:0005524">
    <property type="term" value="F:ATP binding"/>
    <property type="evidence" value="ECO:0007669"/>
    <property type="project" value="UniProtKB-KW"/>
</dbReference>
<dbReference type="GO" id="GO:0000287">
    <property type="term" value="F:magnesium ion binding"/>
    <property type="evidence" value="ECO:0007669"/>
    <property type="project" value="UniProtKB-UniRule"/>
</dbReference>
<dbReference type="GO" id="GO:0009102">
    <property type="term" value="P:biotin biosynthetic process"/>
    <property type="evidence" value="ECO:0007669"/>
    <property type="project" value="UniProtKB-UniRule"/>
</dbReference>
<dbReference type="HAMAP" id="MF_00668">
    <property type="entry name" value="BioW"/>
    <property type="match status" value="1"/>
</dbReference>
<dbReference type="InterPro" id="IPR005499">
    <property type="entry name" value="BioW"/>
</dbReference>
<dbReference type="NCBIfam" id="TIGR01204">
    <property type="entry name" value="bioW"/>
    <property type="match status" value="1"/>
</dbReference>
<dbReference type="NCBIfam" id="NF002360">
    <property type="entry name" value="PRK01322.1"/>
    <property type="match status" value="1"/>
</dbReference>
<dbReference type="Pfam" id="PF03744">
    <property type="entry name" value="BioW"/>
    <property type="match status" value="1"/>
</dbReference>
<organism>
    <name type="scientific">Thermodesulfovibrio yellowstonii (strain ATCC 51303 / DSM 11347 / YP87)</name>
    <dbReference type="NCBI Taxonomy" id="289376"/>
    <lineage>
        <taxon>Bacteria</taxon>
        <taxon>Pseudomonadati</taxon>
        <taxon>Nitrospirota</taxon>
        <taxon>Thermodesulfovibrionia</taxon>
        <taxon>Thermodesulfovibrionales</taxon>
        <taxon>Thermodesulfovibrionaceae</taxon>
        <taxon>Thermodesulfovibrio</taxon>
    </lineage>
</organism>
<feature type="chain" id="PRO_0000412092" description="6-carboxyhexanoate--CoA ligase">
    <location>
        <begin position="1"/>
        <end position="245"/>
    </location>
</feature>
<evidence type="ECO:0000255" key="1">
    <source>
        <dbReference type="HAMAP-Rule" id="MF_00668"/>
    </source>
</evidence>
<gene>
    <name evidence="1" type="primary">bioW</name>
    <name type="ordered locus">THEYE_A0810</name>
</gene>
<comment type="function">
    <text evidence="1">Catalyzes the transformation of pimelate into pimeloyl-CoA with concomitant hydrolysis of ATP to AMP.</text>
</comment>
<comment type="catalytic activity">
    <reaction evidence="1">
        <text>heptanedioate + ATP + CoA = 6-carboxyhexanoyl-CoA + AMP + diphosphate</text>
        <dbReference type="Rhea" id="RHEA:14781"/>
        <dbReference type="ChEBI" id="CHEBI:30616"/>
        <dbReference type="ChEBI" id="CHEBI:33019"/>
        <dbReference type="ChEBI" id="CHEBI:36165"/>
        <dbReference type="ChEBI" id="CHEBI:57287"/>
        <dbReference type="ChEBI" id="CHEBI:57360"/>
        <dbReference type="ChEBI" id="CHEBI:456215"/>
        <dbReference type="EC" id="6.2.1.14"/>
    </reaction>
</comment>
<comment type="cofactor">
    <cofactor evidence="1">
        <name>Mg(2+)</name>
        <dbReference type="ChEBI" id="CHEBI:18420"/>
    </cofactor>
</comment>
<comment type="pathway">
    <text evidence="1">Metabolic intermediate metabolism; pimeloyl-CoA biosynthesis; pimeloyl-CoA from pimelate: step 1/1.</text>
</comment>
<comment type="subunit">
    <text evidence="1">Homodimer.</text>
</comment>
<comment type="similarity">
    <text evidence="1">Belongs to the BioW family.</text>
</comment>